<evidence type="ECO:0000255" key="1">
    <source>
        <dbReference type="HAMAP-Rule" id="MF_01310"/>
    </source>
</evidence>
<evidence type="ECO:0000305" key="2"/>
<organism>
    <name type="scientific">Chlamydia trachomatis serovar D (strain ATCC VR-885 / DSM 19411 / UW-3/Cx)</name>
    <dbReference type="NCBI Taxonomy" id="272561"/>
    <lineage>
        <taxon>Bacteria</taxon>
        <taxon>Pseudomonadati</taxon>
        <taxon>Chlamydiota</taxon>
        <taxon>Chlamydiia</taxon>
        <taxon>Chlamydiales</taxon>
        <taxon>Chlamydiaceae</taxon>
        <taxon>Chlamydia/Chlamydophila group</taxon>
        <taxon>Chlamydia</taxon>
    </lineage>
</organism>
<protein>
    <recommendedName>
        <fullName evidence="1">Small ribosomal subunit protein uS11</fullName>
    </recommendedName>
    <alternativeName>
        <fullName evidence="2">30S ribosomal protein S11</fullName>
    </alternativeName>
</protein>
<feature type="chain" id="PRO_0000123132" description="Small ribosomal subunit protein uS11">
    <location>
        <begin position="1"/>
        <end position="132"/>
    </location>
</feature>
<proteinExistence type="inferred from homology"/>
<accession>P0CE03</accession>
<accession>O84516</accession>
<accession>P47761</accession>
<sequence>MVKNQAQKKGVKRKQVKNIPSGVVHVKATFNNTIVTITDPAGNVISWASAGKVGYSGSRKSSAFAATVAAQDAAKAAMSSGLKEVEVGLKGTGAGRESAVRALISSGLIVSVIRDETPVPHNGCRPRKRRRV</sequence>
<gene>
    <name evidence="1" type="primary">rpsK</name>
    <name type="synonym">rs11</name>
    <name type="ordered locus">CT_508</name>
</gene>
<name>RS11_CHLTR</name>
<comment type="function">
    <text evidence="1">Located on the platform of the 30S subunit, it bridges several disparate RNA helices of the 16S rRNA. Forms part of the Shine-Dalgarno cleft in the 70S ribosome.</text>
</comment>
<comment type="subunit">
    <text evidence="1">Part of the 30S ribosomal subunit. Interacts with proteins S7 and S18. Binds to IF-3.</text>
</comment>
<comment type="similarity">
    <text evidence="1">Belongs to the universal ribosomal protein uS11 family.</text>
</comment>
<dbReference type="EMBL" id="AE001273">
    <property type="protein sequence ID" value="AAC68109.1"/>
    <property type="molecule type" value="Genomic_DNA"/>
</dbReference>
<dbReference type="PIR" id="I40745">
    <property type="entry name" value="I40745"/>
</dbReference>
<dbReference type="RefSeq" id="NP_220023.1">
    <property type="nucleotide sequence ID" value="NC_000117.1"/>
</dbReference>
<dbReference type="RefSeq" id="WP_009871872.1">
    <property type="nucleotide sequence ID" value="NC_000117.1"/>
</dbReference>
<dbReference type="SMR" id="P0CE03"/>
<dbReference type="FunCoup" id="P0CE03">
    <property type="interactions" value="265"/>
</dbReference>
<dbReference type="STRING" id="272561.CT_508"/>
<dbReference type="EnsemblBacteria" id="AAC68109">
    <property type="protein sequence ID" value="AAC68109"/>
    <property type="gene ID" value="CT_508"/>
</dbReference>
<dbReference type="GeneID" id="884284"/>
<dbReference type="KEGG" id="ctr:CT_508"/>
<dbReference type="PATRIC" id="fig|272561.5.peg.552"/>
<dbReference type="HOGENOM" id="CLU_072439_5_0_0"/>
<dbReference type="InParanoid" id="P0CE03"/>
<dbReference type="OrthoDB" id="9806415at2"/>
<dbReference type="Proteomes" id="UP000000431">
    <property type="component" value="Chromosome"/>
</dbReference>
<dbReference type="GO" id="GO:0022627">
    <property type="term" value="C:cytosolic small ribosomal subunit"/>
    <property type="evidence" value="ECO:0000318"/>
    <property type="project" value="GO_Central"/>
</dbReference>
<dbReference type="GO" id="GO:0019843">
    <property type="term" value="F:rRNA binding"/>
    <property type="evidence" value="ECO:0007669"/>
    <property type="project" value="UniProtKB-UniRule"/>
</dbReference>
<dbReference type="GO" id="GO:0003735">
    <property type="term" value="F:structural constituent of ribosome"/>
    <property type="evidence" value="ECO:0000318"/>
    <property type="project" value="GO_Central"/>
</dbReference>
<dbReference type="GO" id="GO:0006412">
    <property type="term" value="P:translation"/>
    <property type="evidence" value="ECO:0000318"/>
    <property type="project" value="GO_Central"/>
</dbReference>
<dbReference type="FunFam" id="3.30.420.80:FF:000004">
    <property type="entry name" value="30S ribosomal protein S11"/>
    <property type="match status" value="1"/>
</dbReference>
<dbReference type="Gene3D" id="3.30.420.80">
    <property type="entry name" value="Ribosomal protein S11"/>
    <property type="match status" value="1"/>
</dbReference>
<dbReference type="HAMAP" id="MF_01310">
    <property type="entry name" value="Ribosomal_uS11"/>
    <property type="match status" value="1"/>
</dbReference>
<dbReference type="InterPro" id="IPR001971">
    <property type="entry name" value="Ribosomal_uS11"/>
</dbReference>
<dbReference type="InterPro" id="IPR019981">
    <property type="entry name" value="Ribosomal_uS11_bac-type"/>
</dbReference>
<dbReference type="InterPro" id="IPR018102">
    <property type="entry name" value="Ribosomal_uS11_CS"/>
</dbReference>
<dbReference type="InterPro" id="IPR036967">
    <property type="entry name" value="Ribosomal_uS11_sf"/>
</dbReference>
<dbReference type="NCBIfam" id="NF003698">
    <property type="entry name" value="PRK05309.1"/>
    <property type="match status" value="1"/>
</dbReference>
<dbReference type="NCBIfam" id="TIGR03632">
    <property type="entry name" value="uS11_bact"/>
    <property type="match status" value="1"/>
</dbReference>
<dbReference type="PANTHER" id="PTHR11759">
    <property type="entry name" value="40S RIBOSOMAL PROTEIN S14/30S RIBOSOMAL PROTEIN S11"/>
    <property type="match status" value="1"/>
</dbReference>
<dbReference type="Pfam" id="PF00411">
    <property type="entry name" value="Ribosomal_S11"/>
    <property type="match status" value="1"/>
</dbReference>
<dbReference type="PIRSF" id="PIRSF002131">
    <property type="entry name" value="Ribosomal_S11"/>
    <property type="match status" value="1"/>
</dbReference>
<dbReference type="SUPFAM" id="SSF53137">
    <property type="entry name" value="Translational machinery components"/>
    <property type="match status" value="1"/>
</dbReference>
<dbReference type="PROSITE" id="PS00054">
    <property type="entry name" value="RIBOSOMAL_S11"/>
    <property type="match status" value="1"/>
</dbReference>
<keyword id="KW-1185">Reference proteome</keyword>
<keyword id="KW-0687">Ribonucleoprotein</keyword>
<keyword id="KW-0689">Ribosomal protein</keyword>
<keyword id="KW-0694">RNA-binding</keyword>
<keyword id="KW-0699">rRNA-binding</keyword>
<reference key="1">
    <citation type="journal article" date="1998" name="Science">
        <title>Genome sequence of an obligate intracellular pathogen of humans: Chlamydia trachomatis.</title>
        <authorList>
            <person name="Stephens R.S."/>
            <person name="Kalman S."/>
            <person name="Lammel C.J."/>
            <person name="Fan J."/>
            <person name="Marathe R."/>
            <person name="Aravind L."/>
            <person name="Mitchell W.P."/>
            <person name="Olinger L."/>
            <person name="Tatusov R.L."/>
            <person name="Zhao Q."/>
            <person name="Koonin E.V."/>
            <person name="Davis R.W."/>
        </authorList>
    </citation>
    <scope>NUCLEOTIDE SEQUENCE [LARGE SCALE GENOMIC DNA]</scope>
    <source>
        <strain>ATCC VR-885 / DSM 19411 / UW-3/Cx</strain>
    </source>
</reference>